<sequence length="351" mass="38298">MSIVQLDHVSVTFKRKKAADVQAVQDVTLHIEKGDIYGIVGFSGAGKSTLVRTINLLQKPTAGDVVVGGVDFVKDGKQVISGKDLQARRRKIGMIFQQFNLLNETTVIENIAFALKHSDLSDDELEEKCHKLLKLVDLEDKANAYPAQLSGGQQQRVAIARALANDPEILLSDEATSALDPQTTIQILDLLKKLNRELGLTIVLITHEMAAVKKIANKVAVMENGRVVENGNLRDVFLAPKAELTQKFVGGSLAVVDTLKSLNISLAENEALYQLVYSLNNVAKSIIIELYREVGVEASMLYGNVEVLADEPVGTLLVTVKGDADKQKVTLKFLSDEGVTVTELDERGNRL</sequence>
<comment type="function">
    <text evidence="1">Part of the ABC transporter complex MetNIQ involved in methionine import. Responsible for energy coupling to the transport system.</text>
</comment>
<comment type="catalytic activity">
    <reaction evidence="1">
        <text>L-methionine(out) + ATP + H2O = L-methionine(in) + ADP + phosphate + H(+)</text>
        <dbReference type="Rhea" id="RHEA:29779"/>
        <dbReference type="ChEBI" id="CHEBI:15377"/>
        <dbReference type="ChEBI" id="CHEBI:15378"/>
        <dbReference type="ChEBI" id="CHEBI:30616"/>
        <dbReference type="ChEBI" id="CHEBI:43474"/>
        <dbReference type="ChEBI" id="CHEBI:57844"/>
        <dbReference type="ChEBI" id="CHEBI:456216"/>
        <dbReference type="EC" id="7.4.2.11"/>
    </reaction>
</comment>
<comment type="catalytic activity">
    <reaction evidence="1">
        <text>D-methionine(out) + ATP + H2O = D-methionine(in) + ADP + phosphate + H(+)</text>
        <dbReference type="Rhea" id="RHEA:29767"/>
        <dbReference type="ChEBI" id="CHEBI:15377"/>
        <dbReference type="ChEBI" id="CHEBI:15378"/>
        <dbReference type="ChEBI" id="CHEBI:30616"/>
        <dbReference type="ChEBI" id="CHEBI:43474"/>
        <dbReference type="ChEBI" id="CHEBI:57932"/>
        <dbReference type="ChEBI" id="CHEBI:456216"/>
        <dbReference type="EC" id="7.4.2.11"/>
    </reaction>
</comment>
<comment type="subunit">
    <text evidence="1">The complex is composed of two ATP-binding proteins (MetN), two transmembrane proteins (MetI) and a solute-binding protein (MetQ).</text>
</comment>
<comment type="subcellular location">
    <subcellularLocation>
        <location evidence="1">Cell membrane</location>
        <topology evidence="1">Peripheral membrane protein</topology>
    </subcellularLocation>
</comment>
<comment type="similarity">
    <text evidence="1">Belongs to the ABC transporter superfamily. Methionine importer (TC 3.A.1.24) family.</text>
</comment>
<proteinExistence type="inferred from homology"/>
<evidence type="ECO:0000255" key="1">
    <source>
        <dbReference type="HAMAP-Rule" id="MF_01719"/>
    </source>
</evidence>
<gene>
    <name evidence="1" type="primary">metN</name>
    <name type="ordered locus">LBUL_0724</name>
</gene>
<organism>
    <name type="scientific">Lactobacillus delbrueckii subsp. bulgaricus (strain ATCC BAA-365 / Lb-18)</name>
    <dbReference type="NCBI Taxonomy" id="321956"/>
    <lineage>
        <taxon>Bacteria</taxon>
        <taxon>Bacillati</taxon>
        <taxon>Bacillota</taxon>
        <taxon>Bacilli</taxon>
        <taxon>Lactobacillales</taxon>
        <taxon>Lactobacillaceae</taxon>
        <taxon>Lactobacillus</taxon>
    </lineage>
</organism>
<dbReference type="EC" id="7.4.2.11" evidence="1"/>
<dbReference type="EMBL" id="CP000412">
    <property type="protein sequence ID" value="ABJ58347.1"/>
    <property type="molecule type" value="Genomic_DNA"/>
</dbReference>
<dbReference type="RefSeq" id="WP_011678154.1">
    <property type="nucleotide sequence ID" value="NC_008529.1"/>
</dbReference>
<dbReference type="SMR" id="Q04B25"/>
<dbReference type="KEGG" id="lbu:LBUL_0724"/>
<dbReference type="HOGENOM" id="CLU_000604_1_3_9"/>
<dbReference type="BioCyc" id="LDEL321956:LBUL_RS03455-MONOMER"/>
<dbReference type="GO" id="GO:0005886">
    <property type="term" value="C:plasma membrane"/>
    <property type="evidence" value="ECO:0007669"/>
    <property type="project" value="UniProtKB-SubCell"/>
</dbReference>
<dbReference type="GO" id="GO:0033232">
    <property type="term" value="F:ABC-type D-methionine transporter activity"/>
    <property type="evidence" value="ECO:0007669"/>
    <property type="project" value="UniProtKB-EC"/>
</dbReference>
<dbReference type="GO" id="GO:0005524">
    <property type="term" value="F:ATP binding"/>
    <property type="evidence" value="ECO:0007669"/>
    <property type="project" value="UniProtKB-KW"/>
</dbReference>
<dbReference type="GO" id="GO:0016887">
    <property type="term" value="F:ATP hydrolysis activity"/>
    <property type="evidence" value="ECO:0007669"/>
    <property type="project" value="InterPro"/>
</dbReference>
<dbReference type="FunFam" id="3.40.50.300:FF:000056">
    <property type="entry name" value="Cell division ATP-binding protein FtsE"/>
    <property type="match status" value="1"/>
</dbReference>
<dbReference type="Gene3D" id="3.30.70.260">
    <property type="match status" value="1"/>
</dbReference>
<dbReference type="Gene3D" id="3.40.50.300">
    <property type="entry name" value="P-loop containing nucleotide triphosphate hydrolases"/>
    <property type="match status" value="1"/>
</dbReference>
<dbReference type="InterPro" id="IPR003593">
    <property type="entry name" value="AAA+_ATPase"/>
</dbReference>
<dbReference type="InterPro" id="IPR003439">
    <property type="entry name" value="ABC_transporter-like_ATP-bd"/>
</dbReference>
<dbReference type="InterPro" id="IPR017871">
    <property type="entry name" value="ABC_transporter-like_CS"/>
</dbReference>
<dbReference type="InterPro" id="IPR045865">
    <property type="entry name" value="ACT-like_dom_sf"/>
</dbReference>
<dbReference type="InterPro" id="IPR050086">
    <property type="entry name" value="MetN_ABC_transporter-like"/>
</dbReference>
<dbReference type="InterPro" id="IPR018449">
    <property type="entry name" value="NIL_domain"/>
</dbReference>
<dbReference type="InterPro" id="IPR027417">
    <property type="entry name" value="P-loop_NTPase"/>
</dbReference>
<dbReference type="PANTHER" id="PTHR43166">
    <property type="entry name" value="AMINO ACID IMPORT ATP-BINDING PROTEIN"/>
    <property type="match status" value="1"/>
</dbReference>
<dbReference type="PANTHER" id="PTHR43166:SF30">
    <property type="entry name" value="METHIONINE IMPORT ATP-BINDING PROTEIN METN"/>
    <property type="match status" value="1"/>
</dbReference>
<dbReference type="Pfam" id="PF00005">
    <property type="entry name" value="ABC_tran"/>
    <property type="match status" value="1"/>
</dbReference>
<dbReference type="Pfam" id="PF09383">
    <property type="entry name" value="NIL"/>
    <property type="match status" value="1"/>
</dbReference>
<dbReference type="SMART" id="SM00382">
    <property type="entry name" value="AAA"/>
    <property type="match status" value="1"/>
</dbReference>
<dbReference type="SMART" id="SM00930">
    <property type="entry name" value="NIL"/>
    <property type="match status" value="1"/>
</dbReference>
<dbReference type="SUPFAM" id="SSF55021">
    <property type="entry name" value="ACT-like"/>
    <property type="match status" value="1"/>
</dbReference>
<dbReference type="SUPFAM" id="SSF52540">
    <property type="entry name" value="P-loop containing nucleoside triphosphate hydrolases"/>
    <property type="match status" value="1"/>
</dbReference>
<dbReference type="PROSITE" id="PS00211">
    <property type="entry name" value="ABC_TRANSPORTER_1"/>
    <property type="match status" value="1"/>
</dbReference>
<dbReference type="PROSITE" id="PS50893">
    <property type="entry name" value="ABC_TRANSPORTER_2"/>
    <property type="match status" value="1"/>
</dbReference>
<dbReference type="PROSITE" id="PS51264">
    <property type="entry name" value="METN"/>
    <property type="match status" value="1"/>
</dbReference>
<feature type="chain" id="PRO_0000277683" description="Methionine import ATP-binding protein MetN">
    <location>
        <begin position="1"/>
        <end position="351"/>
    </location>
</feature>
<feature type="domain" description="ABC transporter" evidence="1">
    <location>
        <begin position="4"/>
        <end position="249"/>
    </location>
</feature>
<feature type="binding site" evidence="1">
    <location>
        <begin position="41"/>
        <end position="48"/>
    </location>
    <ligand>
        <name>ATP</name>
        <dbReference type="ChEBI" id="CHEBI:30616"/>
    </ligand>
</feature>
<keyword id="KW-0029">Amino-acid transport</keyword>
<keyword id="KW-0067">ATP-binding</keyword>
<keyword id="KW-1003">Cell membrane</keyword>
<keyword id="KW-0472">Membrane</keyword>
<keyword id="KW-0547">Nucleotide-binding</keyword>
<keyword id="KW-1278">Translocase</keyword>
<keyword id="KW-0813">Transport</keyword>
<reference key="1">
    <citation type="journal article" date="2006" name="Proc. Natl. Acad. Sci. U.S.A.">
        <title>Comparative genomics of the lactic acid bacteria.</title>
        <authorList>
            <person name="Makarova K.S."/>
            <person name="Slesarev A."/>
            <person name="Wolf Y.I."/>
            <person name="Sorokin A."/>
            <person name="Mirkin B."/>
            <person name="Koonin E.V."/>
            <person name="Pavlov A."/>
            <person name="Pavlova N."/>
            <person name="Karamychev V."/>
            <person name="Polouchine N."/>
            <person name="Shakhova V."/>
            <person name="Grigoriev I."/>
            <person name="Lou Y."/>
            <person name="Rohksar D."/>
            <person name="Lucas S."/>
            <person name="Huang K."/>
            <person name="Goodstein D.M."/>
            <person name="Hawkins T."/>
            <person name="Plengvidhya V."/>
            <person name="Welker D."/>
            <person name="Hughes J."/>
            <person name="Goh Y."/>
            <person name="Benson A."/>
            <person name="Baldwin K."/>
            <person name="Lee J.-H."/>
            <person name="Diaz-Muniz I."/>
            <person name="Dosti B."/>
            <person name="Smeianov V."/>
            <person name="Wechter W."/>
            <person name="Barabote R."/>
            <person name="Lorca G."/>
            <person name="Altermann E."/>
            <person name="Barrangou R."/>
            <person name="Ganesan B."/>
            <person name="Xie Y."/>
            <person name="Rawsthorne H."/>
            <person name="Tamir D."/>
            <person name="Parker C."/>
            <person name="Breidt F."/>
            <person name="Broadbent J.R."/>
            <person name="Hutkins R."/>
            <person name="O'Sullivan D."/>
            <person name="Steele J."/>
            <person name="Unlu G."/>
            <person name="Saier M.H. Jr."/>
            <person name="Klaenhammer T."/>
            <person name="Richardson P."/>
            <person name="Kozyavkin S."/>
            <person name="Weimer B.C."/>
            <person name="Mills D.A."/>
        </authorList>
    </citation>
    <scope>NUCLEOTIDE SEQUENCE [LARGE SCALE GENOMIC DNA]</scope>
    <source>
        <strain>ATCC BAA-365 / Lb-18</strain>
    </source>
</reference>
<protein>
    <recommendedName>
        <fullName evidence="1">Methionine import ATP-binding protein MetN</fullName>
        <ecNumber evidence="1">7.4.2.11</ecNumber>
    </recommendedName>
</protein>
<accession>Q04B25</accession>
<name>METN_LACDB</name>